<reference key="1">
    <citation type="journal article" date="1996" name="DNA Res.">
        <title>Sequence analysis of the genome of the unicellular cyanobacterium Synechocystis sp. strain PCC6803. II. Sequence determination of the entire genome and assignment of potential protein-coding regions.</title>
        <authorList>
            <person name="Kaneko T."/>
            <person name="Sato S."/>
            <person name="Kotani H."/>
            <person name="Tanaka A."/>
            <person name="Asamizu E."/>
            <person name="Nakamura Y."/>
            <person name="Miyajima N."/>
            <person name="Hirosawa M."/>
            <person name="Sugiura M."/>
            <person name="Sasamoto S."/>
            <person name="Kimura T."/>
            <person name="Hosouchi T."/>
            <person name="Matsuno A."/>
            <person name="Muraki A."/>
            <person name="Nakazaki N."/>
            <person name="Naruo K."/>
            <person name="Okumura S."/>
            <person name="Shimpo S."/>
            <person name="Takeuchi C."/>
            <person name="Wada T."/>
            <person name="Watanabe A."/>
            <person name="Yamada M."/>
            <person name="Yasuda M."/>
            <person name="Tabata S."/>
        </authorList>
    </citation>
    <scope>NUCLEOTIDE SEQUENCE [LARGE SCALE GENOMIC DNA]</scope>
    <source>
        <strain>ATCC 27184 / PCC 6803 / Kazusa</strain>
    </source>
</reference>
<reference key="2">
    <citation type="journal article" date="1997" name="Electrophoresis">
        <title>Towards a proteome project of cyanobacterium Synechocystis sp. strain PCC6803: linking 130 protein spots with their respective genes.</title>
        <authorList>
            <person name="Sazuka T."/>
            <person name="Ohara O."/>
        </authorList>
    </citation>
    <scope>PROTEIN SEQUENCE OF 2-21</scope>
</reference>
<reference key="3">
    <citation type="journal article" date="2008" name="J. Bacteriol.">
        <title>A multiprotein bicarbonate dehydration complex essential to carboxysome function in cyanobacteria.</title>
        <authorList>
            <person name="Cot S.S."/>
            <person name="So A.K."/>
            <person name="Espie G.S."/>
        </authorList>
    </citation>
    <scope>INTERACTION WITH CCMM</scope>
    <source>
        <strain>ATCC 27184 / PCC 6803 / Kazusa</strain>
    </source>
</reference>
<reference key="4">
    <citation type="journal article" date="2009" name="Protein Sci.">
        <title>Two-dimensional crystals of carboxysome shell proteins recapitulate the hexagonal packing of three-dimensional crystals.</title>
        <authorList>
            <person name="Dryden K.A."/>
            <person name="Crowley C.S."/>
            <person name="Tanaka S."/>
            <person name="Yeates T.O."/>
            <person name="Yeager M."/>
        </authorList>
    </citation>
    <scope>FUNCTION</scope>
    <scope>TWO-DIMENSIONAL CRYSTALS</scope>
    <scope>SUBUNIT</scope>
    <source>
        <strain>ATCC 27184 / PCC 6803 / Kazusa</strain>
    </source>
</reference>
<reference evidence="12 13" key="5">
    <citation type="journal article" date="2005" name="Science">
        <title>Protein structures forming the shell of primitive bacterial organelles.</title>
        <authorList>
            <person name="Kerfeld C.A."/>
            <person name="Sawaya M.R."/>
            <person name="Tanaka S."/>
            <person name="Nguyen C.V."/>
            <person name="Phillips M."/>
            <person name="Beeby M."/>
            <person name="Yeates T.O."/>
        </authorList>
    </citation>
    <scope>X-RAY CRYSTALLOGRAPHY (1.80 ANGSTROMS)</scope>
    <scope>FUNCTION</scope>
    <scope>SUBUNIT</scope>
    <scope>DOMAIN</scope>
</reference>
<reference evidence="14" key="6">
    <citation type="journal article" date="2019" name="PLoS ONE">
        <title>Occurrence and stability of hetero-hexamer associations formed by beta-carboxysome CcmK shell components.</title>
        <authorList>
            <person name="Garcia-Alles L.F."/>
            <person name="Root K."/>
            <person name="Maveyraud L."/>
            <person name="Aubry N."/>
            <person name="Lesniewska E."/>
            <person name="Mourey L."/>
            <person name="Zenobi R."/>
            <person name="Truan G."/>
        </authorList>
    </citation>
    <scope>X-RAY CRYSTALLOGRAPHY (1.80 ANGSTROMS) OF 3-112</scope>
    <scope>SUBUNIT</scope>
    <source>
        <strain>ATCC 27184 / PCC 6803 / Kazusa</strain>
    </source>
</reference>
<proteinExistence type="evidence at protein level"/>
<comment type="function">
    <text evidence="2 4 8 11">A probably minor shell protein component of the carboxysome, a polyhedral inclusion where RuBisCO (ribulose bisphosphate carboxylase, rbcL-rbcS) is sequestered. The central pore probably regulates metabolite flux, as might the gaps between assembled homohexamers (PubMed:16081736). Homohexamers make sheets that probably form the facets of the polyhedral carboxysome (Probable) (PubMed:19844993). This subunit probably makes both homohexamers and heterohexamers with CcmK3 (Probable).</text>
</comment>
<comment type="subunit">
    <text evidence="3 4 5 8">Homohexamer (Probable) (PubMed:19844993, PubMed:31603944). Interacts with full-length CcmM (PubMed:17993516). Forms mixed heterohexamers with CcmK3, probably with 1:5 CcmK3:CcmK4 stoichiometry. Only very weak interactions with CcmK1 and CcmK2 were seen (PubMed:31603944).</text>
</comment>
<comment type="subcellular location">
    <subcellularLocation>
        <location evidence="1 8 9 10">Carboxysome</location>
    </subcellularLocation>
    <text evidence="9">This cyanobacterium makes beta-type carboxysomes.</text>
</comment>
<comment type="domain">
    <text evidence="2">The tight homohexamer forms a pore with an opening of about 4 Angstroms in diameter which is positively charged.</text>
</comment>
<comment type="similarity">
    <text evidence="1">Belongs to the bacterial microcompartments protein family. CcmK subfamily.</text>
</comment>
<protein>
    <recommendedName>
        <fullName evidence="1 7">Carboxysome shell protein CcmK4</fullName>
    </recommendedName>
    <alternativeName>
        <fullName evidence="1">Carbon dioxide-concentrating mechanism protein CcmK4</fullName>
    </alternativeName>
</protein>
<feature type="initiator methionine" description="Removed" evidence="6">
    <location>
        <position position="1"/>
    </location>
</feature>
<feature type="chain" id="PRO_0000201509" description="Carboxysome shell protein CcmK4">
    <location>
        <begin position="2"/>
        <end position="112"/>
    </location>
</feature>
<feature type="domain" description="BMC" evidence="1">
    <location>
        <begin position="6"/>
        <end position="92"/>
    </location>
</feature>
<feature type="strand" evidence="15">
    <location>
        <begin position="6"/>
        <end position="14"/>
    </location>
</feature>
<feature type="helix" evidence="15">
    <location>
        <begin position="15"/>
        <end position="28"/>
    </location>
</feature>
<feature type="strand" evidence="15">
    <location>
        <begin position="29"/>
        <end position="40"/>
    </location>
</feature>
<feature type="strand" evidence="15">
    <location>
        <begin position="43"/>
        <end position="50"/>
    </location>
</feature>
<feature type="helix" evidence="15">
    <location>
        <begin position="52"/>
        <end position="67"/>
    </location>
</feature>
<feature type="strand" evidence="15">
    <location>
        <begin position="74"/>
        <end position="82"/>
    </location>
</feature>
<feature type="helix" evidence="15">
    <location>
        <begin position="85"/>
        <end position="90"/>
    </location>
</feature>
<feature type="helix" evidence="15">
    <location>
        <begin position="97"/>
        <end position="99"/>
    </location>
</feature>
<feature type="helix" evidence="15">
    <location>
        <begin position="100"/>
        <end position="106"/>
    </location>
</feature>
<accession>P73407</accession>
<evidence type="ECO:0000255" key="1">
    <source>
        <dbReference type="HAMAP-Rule" id="MF_00854"/>
    </source>
</evidence>
<evidence type="ECO:0000269" key="2">
    <source>
    </source>
</evidence>
<evidence type="ECO:0000269" key="3">
    <source>
    </source>
</evidence>
<evidence type="ECO:0000269" key="4">
    <source>
    </source>
</evidence>
<evidence type="ECO:0000269" key="5">
    <source>
    </source>
</evidence>
<evidence type="ECO:0000269" key="6">
    <source>
    </source>
</evidence>
<evidence type="ECO:0000303" key="7">
    <source>
    </source>
</evidence>
<evidence type="ECO:0000305" key="8">
    <source>
    </source>
</evidence>
<evidence type="ECO:0000305" key="9">
    <source>
    </source>
</evidence>
<evidence type="ECO:0000305" key="10">
    <source>
    </source>
</evidence>
<evidence type="ECO:0000305" key="11">
    <source>
    </source>
</evidence>
<evidence type="ECO:0007744" key="12">
    <source>
        <dbReference type="PDB" id="2A10"/>
    </source>
</evidence>
<evidence type="ECO:0007744" key="13">
    <source>
        <dbReference type="PDB" id="2A18"/>
    </source>
</evidence>
<evidence type="ECO:0007744" key="14">
    <source>
        <dbReference type="PDB" id="6SCR"/>
    </source>
</evidence>
<evidence type="ECO:0007829" key="15">
    <source>
        <dbReference type="PDB" id="6SCR"/>
    </source>
</evidence>
<gene>
    <name evidence="1 7" type="primary">ccmK4</name>
    <name type="ordered locus">slr1839</name>
</gene>
<keyword id="KW-0002">3D-structure</keyword>
<keyword id="KW-1283">Bacterial microcompartment</keyword>
<keyword id="KW-0120">Carbon dioxide fixation</keyword>
<keyword id="KW-1282">Carboxysome</keyword>
<keyword id="KW-0903">Direct protein sequencing</keyword>
<keyword id="KW-0602">Photosynthesis</keyword>
<keyword id="KW-1185">Reference proteome</keyword>
<organism>
    <name type="scientific">Synechocystis sp. (strain ATCC 27184 / PCC 6803 / Kazusa)</name>
    <dbReference type="NCBI Taxonomy" id="1111708"/>
    <lineage>
        <taxon>Bacteria</taxon>
        <taxon>Bacillati</taxon>
        <taxon>Cyanobacteriota</taxon>
        <taxon>Cyanophyceae</taxon>
        <taxon>Synechococcales</taxon>
        <taxon>Merismopediaceae</taxon>
        <taxon>Synechocystis</taxon>
    </lineage>
</organism>
<sequence length="112" mass="11903">MSAQSAVGSIETIGFPGILAAADAMVKAGRITIVGYIRAGSARFTLNIRGDVQEVKTAMAAGIDAINRTEGADVKTWVIIPRPHENVVAVLPIDFSPEVEPFREAAEGLNRR</sequence>
<name>CCMK4_SYNY3</name>
<dbReference type="EMBL" id="BA000022">
    <property type="protein sequence ID" value="BAA17447.1"/>
    <property type="molecule type" value="Genomic_DNA"/>
</dbReference>
<dbReference type="PIR" id="S77344">
    <property type="entry name" value="S77344"/>
</dbReference>
<dbReference type="PDB" id="2A10">
    <property type="method" value="X-ray"/>
    <property type="resolution" value="1.80 A"/>
    <property type="chains" value="A/B/C/D/E/F=1-112"/>
</dbReference>
<dbReference type="PDB" id="2A18">
    <property type="method" value="X-ray"/>
    <property type="resolution" value="2.28 A"/>
    <property type="chains" value="A/B/C=1-112"/>
</dbReference>
<dbReference type="PDB" id="3GV2">
    <property type="method" value="X-ray"/>
    <property type="resolution" value="7.00 A"/>
    <property type="chains" value="A/B/C/D/E/F=1-110"/>
</dbReference>
<dbReference type="PDB" id="6SCR">
    <property type="method" value="X-ray"/>
    <property type="resolution" value="1.80 A"/>
    <property type="chains" value="A/B=3-112"/>
</dbReference>
<dbReference type="PDBsum" id="2A10"/>
<dbReference type="PDBsum" id="2A18"/>
<dbReference type="PDBsum" id="3GV2"/>
<dbReference type="PDBsum" id="6SCR"/>
<dbReference type="SMR" id="P73407"/>
<dbReference type="IntAct" id="P73407">
    <property type="interactions" value="3"/>
</dbReference>
<dbReference type="STRING" id="1148.gene:10498311"/>
<dbReference type="TCDB" id="1.S.1.1.9">
    <property type="family name" value="the bacterial microcompartment shell/pore-forming protein-1 (bmc-sp1) family"/>
</dbReference>
<dbReference type="PaxDb" id="1148-1652526"/>
<dbReference type="EnsemblBacteria" id="BAA17447">
    <property type="protein sequence ID" value="BAA17447"/>
    <property type="gene ID" value="BAA17447"/>
</dbReference>
<dbReference type="KEGG" id="syn:slr1839"/>
<dbReference type="eggNOG" id="COG4577">
    <property type="taxonomic scope" value="Bacteria"/>
</dbReference>
<dbReference type="InParanoid" id="P73407"/>
<dbReference type="PhylomeDB" id="P73407"/>
<dbReference type="EvolutionaryTrace" id="P73407"/>
<dbReference type="Proteomes" id="UP000001425">
    <property type="component" value="Chromosome"/>
</dbReference>
<dbReference type="GO" id="GO:0031470">
    <property type="term" value="C:carboxysome"/>
    <property type="evidence" value="ECO:0007669"/>
    <property type="project" value="UniProtKB-SubCell"/>
</dbReference>
<dbReference type="GO" id="GO:0043886">
    <property type="term" value="F:structural constituent of carboxysome shell"/>
    <property type="evidence" value="ECO:0000353"/>
    <property type="project" value="UniProtKB"/>
</dbReference>
<dbReference type="GO" id="GO:0015977">
    <property type="term" value="P:carbon fixation"/>
    <property type="evidence" value="ECO:0007669"/>
    <property type="project" value="UniProtKB-UniRule"/>
</dbReference>
<dbReference type="GO" id="GO:0015979">
    <property type="term" value="P:photosynthesis"/>
    <property type="evidence" value="ECO:0007669"/>
    <property type="project" value="UniProtKB-KW"/>
</dbReference>
<dbReference type="CDD" id="cd07057">
    <property type="entry name" value="BMC_CcmK"/>
    <property type="match status" value="1"/>
</dbReference>
<dbReference type="Gene3D" id="3.30.70.1710">
    <property type="match status" value="1"/>
</dbReference>
<dbReference type="HAMAP" id="MF_00854">
    <property type="entry name" value="CcmK"/>
    <property type="match status" value="1"/>
</dbReference>
<dbReference type="InterPro" id="IPR020808">
    <property type="entry name" value="Bact_microcomp_CS"/>
</dbReference>
<dbReference type="InterPro" id="IPR000249">
    <property type="entry name" value="BMC_dom"/>
</dbReference>
<dbReference type="InterPro" id="IPR050575">
    <property type="entry name" value="BMC_shell"/>
</dbReference>
<dbReference type="InterPro" id="IPR046380">
    <property type="entry name" value="CcmK"/>
</dbReference>
<dbReference type="InterPro" id="IPR037233">
    <property type="entry name" value="CcmK-like_sf"/>
</dbReference>
<dbReference type="InterPro" id="IPR044872">
    <property type="entry name" value="CcmK/CsoS1_BMC"/>
</dbReference>
<dbReference type="PANTHER" id="PTHR33941:SF13">
    <property type="entry name" value="CARBOXYSOME SHELL PROTEIN CCMK4"/>
    <property type="match status" value="1"/>
</dbReference>
<dbReference type="PANTHER" id="PTHR33941">
    <property type="entry name" value="PROPANEDIOL UTILIZATION PROTEIN PDUA"/>
    <property type="match status" value="1"/>
</dbReference>
<dbReference type="Pfam" id="PF00936">
    <property type="entry name" value="BMC"/>
    <property type="match status" value="1"/>
</dbReference>
<dbReference type="SMART" id="SM00877">
    <property type="entry name" value="BMC"/>
    <property type="match status" value="1"/>
</dbReference>
<dbReference type="SUPFAM" id="SSF143414">
    <property type="entry name" value="CcmK-like"/>
    <property type="match status" value="1"/>
</dbReference>
<dbReference type="PROSITE" id="PS01139">
    <property type="entry name" value="BMC_1"/>
    <property type="match status" value="1"/>
</dbReference>
<dbReference type="PROSITE" id="PS51930">
    <property type="entry name" value="BMC_2"/>
    <property type="match status" value="1"/>
</dbReference>